<sequence length="294" mass="33612">MSEFKGCPFSGAASEAGTKAQGEGWHGAQMDFAKDMSYGDYLGLDQILSAQHPLSPDHNEMLFIVQHQTTELWMKLMLHELRAARESVKADSLPPAFKMLTRVSRIMDQLVQAWNVLATMTPPEYSAMRPYLGMSSGFQSFQYREIEFILGNKNAAMLKPHAHRPEHLALVETALKTPSLYDEAIRLMARRGFAVDADCVERDWTQPTAYNASVEAAWLEVYRNPSAHWELYELGEKFVDLEDSFRQWRFRHVTTVERVIGFKRGTGGTEGVSYLRKMLDVVLFPELWKLRTDL</sequence>
<protein>
    <recommendedName>
        <fullName evidence="1">Tryptophan 2,3-dioxygenase</fullName>
        <shortName evidence="1">TDO</shortName>
        <ecNumber evidence="1">1.13.11.11</ecNumber>
    </recommendedName>
    <alternativeName>
        <fullName evidence="1">Tryptamin 2,3-dioxygenase</fullName>
    </alternativeName>
    <alternativeName>
        <fullName evidence="1">Tryptophan oxygenase</fullName>
        <shortName evidence="1">TO</shortName>
        <shortName evidence="1">TRPO</shortName>
    </alternativeName>
    <alternativeName>
        <fullName evidence="1">Tryptophan pyrrolase</fullName>
    </alternativeName>
    <alternativeName>
        <fullName evidence="1">Tryptophanase</fullName>
    </alternativeName>
</protein>
<comment type="function">
    <text evidence="1">Heme-dependent dioxygenase that catalyzes the oxidative cleavage of the L-tryptophan (L-Trp) pyrrole ring and converts L-tryptophan to N-formyl-L-kynurenine. Catalyzes the oxidative cleavage of the indole moiety.</text>
</comment>
<comment type="catalytic activity">
    <reaction evidence="1">
        <text>L-tryptophan + O2 = N-formyl-L-kynurenine</text>
        <dbReference type="Rhea" id="RHEA:24536"/>
        <dbReference type="ChEBI" id="CHEBI:15379"/>
        <dbReference type="ChEBI" id="CHEBI:57912"/>
        <dbReference type="ChEBI" id="CHEBI:58629"/>
        <dbReference type="EC" id="1.13.11.11"/>
    </reaction>
</comment>
<comment type="cofactor">
    <cofactor evidence="1">
        <name>heme</name>
        <dbReference type="ChEBI" id="CHEBI:30413"/>
    </cofactor>
    <text evidence="1">Binds 1 heme group per subunit.</text>
</comment>
<comment type="pathway">
    <text evidence="1">Amino-acid degradation; L-tryptophan degradation via kynurenine pathway; L-kynurenine from L-tryptophan: step 1/2.</text>
</comment>
<comment type="subunit">
    <text evidence="1">Homotetramer.</text>
</comment>
<comment type="similarity">
    <text evidence="1">Belongs to the tryptophan 2,3-dioxygenase family.</text>
</comment>
<proteinExistence type="inferred from homology"/>
<organism>
    <name type="scientific">Cupriavidus necator (strain ATCC 17699 / DSM 428 / KCTC 22496 / NCIMB 10442 / H16 / Stanier 337)</name>
    <name type="common">Ralstonia eutropha</name>
    <dbReference type="NCBI Taxonomy" id="381666"/>
    <lineage>
        <taxon>Bacteria</taxon>
        <taxon>Pseudomonadati</taxon>
        <taxon>Pseudomonadota</taxon>
        <taxon>Betaproteobacteria</taxon>
        <taxon>Burkholderiales</taxon>
        <taxon>Burkholderiaceae</taxon>
        <taxon>Cupriavidus</taxon>
    </lineage>
</organism>
<keyword id="KW-0223">Dioxygenase</keyword>
<keyword id="KW-0349">Heme</keyword>
<keyword id="KW-0408">Iron</keyword>
<keyword id="KW-0479">Metal-binding</keyword>
<keyword id="KW-0560">Oxidoreductase</keyword>
<keyword id="KW-1185">Reference proteome</keyword>
<keyword id="KW-0823">Tryptophan catabolism</keyword>
<accession>Q0K7X7</accession>
<dbReference type="EC" id="1.13.11.11" evidence="1"/>
<dbReference type="EMBL" id="AM260479">
    <property type="protein sequence ID" value="CAJ93894.1"/>
    <property type="molecule type" value="Genomic_DNA"/>
</dbReference>
<dbReference type="RefSeq" id="WP_010813725.1">
    <property type="nucleotide sequence ID" value="NZ_CP039287.1"/>
</dbReference>
<dbReference type="SMR" id="Q0K7X7"/>
<dbReference type="STRING" id="381666.H16_A2816"/>
<dbReference type="KEGG" id="reh:H16_A2816"/>
<dbReference type="eggNOG" id="COG3483">
    <property type="taxonomic scope" value="Bacteria"/>
</dbReference>
<dbReference type="HOGENOM" id="CLU_063240_0_0_4"/>
<dbReference type="OrthoDB" id="9776847at2"/>
<dbReference type="UniPathway" id="UPA00333">
    <property type="reaction ID" value="UER00453"/>
</dbReference>
<dbReference type="Proteomes" id="UP000008210">
    <property type="component" value="Chromosome 1"/>
</dbReference>
<dbReference type="GO" id="GO:0020037">
    <property type="term" value="F:heme binding"/>
    <property type="evidence" value="ECO:0000250"/>
    <property type="project" value="UniProtKB"/>
</dbReference>
<dbReference type="GO" id="GO:0046872">
    <property type="term" value="F:metal ion binding"/>
    <property type="evidence" value="ECO:0007669"/>
    <property type="project" value="UniProtKB-KW"/>
</dbReference>
<dbReference type="GO" id="GO:0004833">
    <property type="term" value="F:tryptophan 2,3-dioxygenase activity"/>
    <property type="evidence" value="ECO:0000250"/>
    <property type="project" value="UniProtKB"/>
</dbReference>
<dbReference type="GO" id="GO:0019442">
    <property type="term" value="P:L-tryptophan catabolic process to acetyl-CoA"/>
    <property type="evidence" value="ECO:0007669"/>
    <property type="project" value="TreeGrafter"/>
</dbReference>
<dbReference type="GO" id="GO:0019441">
    <property type="term" value="P:L-tryptophan catabolic process to kynurenine"/>
    <property type="evidence" value="ECO:0000250"/>
    <property type="project" value="UniProtKB"/>
</dbReference>
<dbReference type="FunFam" id="1.20.58.480:FF:000001">
    <property type="entry name" value="Tryptophan 2,3-dioxygenase"/>
    <property type="match status" value="1"/>
</dbReference>
<dbReference type="Gene3D" id="1.20.58.480">
    <property type="match status" value="1"/>
</dbReference>
<dbReference type="HAMAP" id="MF_01972">
    <property type="entry name" value="T23O"/>
    <property type="match status" value="1"/>
</dbReference>
<dbReference type="InterPro" id="IPR037217">
    <property type="entry name" value="Trp/Indoleamine_2_3_dOase-like"/>
</dbReference>
<dbReference type="InterPro" id="IPR017485">
    <property type="entry name" value="Trp_2-3-dOase_bac"/>
</dbReference>
<dbReference type="InterPro" id="IPR004981">
    <property type="entry name" value="Trp_2_3_dOase"/>
</dbReference>
<dbReference type="NCBIfam" id="TIGR03036">
    <property type="entry name" value="trp_2_3_diox"/>
    <property type="match status" value="1"/>
</dbReference>
<dbReference type="PANTHER" id="PTHR10138">
    <property type="entry name" value="TRYPTOPHAN 2,3-DIOXYGENASE"/>
    <property type="match status" value="1"/>
</dbReference>
<dbReference type="PANTHER" id="PTHR10138:SF0">
    <property type="entry name" value="TRYPTOPHAN 2,3-DIOXYGENASE"/>
    <property type="match status" value="1"/>
</dbReference>
<dbReference type="Pfam" id="PF03301">
    <property type="entry name" value="Trp_dioxygenase"/>
    <property type="match status" value="1"/>
</dbReference>
<dbReference type="SUPFAM" id="SSF140959">
    <property type="entry name" value="Indolic compounds 2,3-dioxygenase-like"/>
    <property type="match status" value="1"/>
</dbReference>
<name>T23O_CUPNH</name>
<reference key="1">
    <citation type="journal article" date="2006" name="Nat. Biotechnol.">
        <title>Genome sequence of the bioplastic-producing 'Knallgas' bacterium Ralstonia eutropha H16.</title>
        <authorList>
            <person name="Pohlmann A."/>
            <person name="Fricke W.F."/>
            <person name="Reinecke F."/>
            <person name="Kusian B."/>
            <person name="Liesegang H."/>
            <person name="Cramm R."/>
            <person name="Eitinger T."/>
            <person name="Ewering C."/>
            <person name="Poetter M."/>
            <person name="Schwartz E."/>
            <person name="Strittmatter A."/>
            <person name="Voss I."/>
            <person name="Gottschalk G."/>
            <person name="Steinbuechel A."/>
            <person name="Friedrich B."/>
            <person name="Bowien B."/>
        </authorList>
    </citation>
    <scope>NUCLEOTIDE SEQUENCE [LARGE SCALE GENOMIC DNA]</scope>
    <source>
        <strain>ATCC 17699 / DSM 428 / KCTC 22496 / NCIMB 10442 / H16 / Stanier 337</strain>
    </source>
</reference>
<evidence type="ECO:0000255" key="1">
    <source>
        <dbReference type="HAMAP-Rule" id="MF_01972"/>
    </source>
</evidence>
<evidence type="ECO:0000256" key="2">
    <source>
        <dbReference type="SAM" id="MobiDB-lite"/>
    </source>
</evidence>
<feature type="chain" id="PRO_0000360127" description="Tryptophan 2,3-dioxygenase">
    <location>
        <begin position="1"/>
        <end position="294"/>
    </location>
</feature>
<feature type="region of interest" description="Disordered" evidence="2">
    <location>
        <begin position="1"/>
        <end position="20"/>
    </location>
</feature>
<feature type="binding site" evidence="1">
    <location>
        <begin position="63"/>
        <end position="67"/>
    </location>
    <ligand>
        <name>substrate</name>
    </ligand>
</feature>
<feature type="binding site" evidence="1">
    <location>
        <position position="125"/>
    </location>
    <ligand>
        <name>substrate</name>
    </ligand>
</feature>
<feature type="binding site" evidence="1">
    <location>
        <position position="129"/>
    </location>
    <ligand>
        <name>substrate</name>
    </ligand>
</feature>
<feature type="binding site" description="axial binding residue" evidence="1">
    <location>
        <position position="252"/>
    </location>
    <ligand>
        <name>heme</name>
        <dbReference type="ChEBI" id="CHEBI:30413"/>
    </ligand>
    <ligandPart>
        <name>Fe</name>
        <dbReference type="ChEBI" id="CHEBI:18248"/>
    </ligandPart>
</feature>
<feature type="binding site" evidence="1">
    <location>
        <position position="266"/>
    </location>
    <ligand>
        <name>substrate</name>
    </ligand>
</feature>
<gene>
    <name evidence="1" type="primary">kynA</name>
    <name type="ordered locus">H16_A2816</name>
</gene>